<protein>
    <recommendedName>
        <fullName>Putative threonylcarbamoyl-AMP synthase</fullName>
        <shortName>TC-AMP synthase</shortName>
        <ecNumber>2.7.7.87</ecNumber>
    </recommendedName>
    <alternativeName>
        <fullName>L-threonylcarbamoyladenylate synthase</fullName>
    </alternativeName>
    <alternativeName>
        <fullName>tRNA threonylcarbamoyladenosine biosynthesis protein MT1340</fullName>
    </alternativeName>
</protein>
<proteinExistence type="inferred from homology"/>
<sequence>MTETFDCADPEQRSRGIVSAVGAIKAGQLVVMPTDTVYGIGADAFDSSAVAALLSAKGRGRDMPVGVLVGSWHTIEGLVYSMPDGARELIRAFWPGALSLVVVQAPSLQWDLGDAHGTVMLRMPLHPVAIELLREVGPMAVSSANISGHPPPVDAEQARSQLGDHVAVYLDAGPSEQQAGSTIVDLTGATPRVLRPGPVSTERIAEVLGVDAASLFG</sequence>
<reference key="1">
    <citation type="journal article" date="2002" name="J. Bacteriol.">
        <title>Whole-genome comparison of Mycobacterium tuberculosis clinical and laboratory strains.</title>
        <authorList>
            <person name="Fleischmann R.D."/>
            <person name="Alland D."/>
            <person name="Eisen J.A."/>
            <person name="Carpenter L."/>
            <person name="White O."/>
            <person name="Peterson J.D."/>
            <person name="DeBoy R.T."/>
            <person name="Dodson R.J."/>
            <person name="Gwinn M.L."/>
            <person name="Haft D.H."/>
            <person name="Hickey E.K."/>
            <person name="Kolonay J.F."/>
            <person name="Nelson W.C."/>
            <person name="Umayam L.A."/>
            <person name="Ermolaeva M.D."/>
            <person name="Salzberg S.L."/>
            <person name="Delcher A."/>
            <person name="Utterback T.R."/>
            <person name="Weidman J.F."/>
            <person name="Khouri H.M."/>
            <person name="Gill J."/>
            <person name="Mikula A."/>
            <person name="Bishai W."/>
            <person name="Jacobs W.R. Jr."/>
            <person name="Venter J.C."/>
            <person name="Fraser C.M."/>
        </authorList>
    </citation>
    <scope>NUCLEOTIDE SEQUENCE [LARGE SCALE GENOMIC DNA]</scope>
    <source>
        <strain>CDC 1551 / Oshkosh</strain>
    </source>
</reference>
<name>TSAC_MYCTO</name>
<dbReference type="EC" id="2.7.7.87"/>
<dbReference type="EMBL" id="AE000516">
    <property type="protein sequence ID" value="AAK45602.1"/>
    <property type="molecule type" value="Genomic_DNA"/>
</dbReference>
<dbReference type="PIR" id="A70774">
    <property type="entry name" value="A70774"/>
</dbReference>
<dbReference type="RefSeq" id="WP_003898815.1">
    <property type="nucleotide sequence ID" value="NZ_KK341227.1"/>
</dbReference>
<dbReference type="SMR" id="P9WGC8"/>
<dbReference type="KEGG" id="mtc:MT1340"/>
<dbReference type="PATRIC" id="fig|83331.31.peg.1447"/>
<dbReference type="HOGENOM" id="CLU_031397_3_1_11"/>
<dbReference type="Proteomes" id="UP000001020">
    <property type="component" value="Chromosome"/>
</dbReference>
<dbReference type="GO" id="GO:0005737">
    <property type="term" value="C:cytoplasm"/>
    <property type="evidence" value="ECO:0007669"/>
    <property type="project" value="UniProtKB-SubCell"/>
</dbReference>
<dbReference type="GO" id="GO:0005524">
    <property type="term" value="F:ATP binding"/>
    <property type="evidence" value="ECO:0007669"/>
    <property type="project" value="UniProtKB-KW"/>
</dbReference>
<dbReference type="GO" id="GO:0003725">
    <property type="term" value="F:double-stranded RNA binding"/>
    <property type="evidence" value="ECO:0007669"/>
    <property type="project" value="InterPro"/>
</dbReference>
<dbReference type="GO" id="GO:0061710">
    <property type="term" value="F:L-threonylcarbamoyladenylate synthase"/>
    <property type="evidence" value="ECO:0007669"/>
    <property type="project" value="UniProtKB-EC"/>
</dbReference>
<dbReference type="GO" id="GO:0000049">
    <property type="term" value="F:tRNA binding"/>
    <property type="evidence" value="ECO:0007669"/>
    <property type="project" value="TreeGrafter"/>
</dbReference>
<dbReference type="GO" id="GO:0006450">
    <property type="term" value="P:regulation of translational fidelity"/>
    <property type="evidence" value="ECO:0007669"/>
    <property type="project" value="TreeGrafter"/>
</dbReference>
<dbReference type="GO" id="GO:0008033">
    <property type="term" value="P:tRNA processing"/>
    <property type="evidence" value="ECO:0007669"/>
    <property type="project" value="UniProtKB-KW"/>
</dbReference>
<dbReference type="FunFam" id="3.90.870.10:FF:000006">
    <property type="entry name" value="Putative threonylcarbamoyl-AMP synthase"/>
    <property type="match status" value="1"/>
</dbReference>
<dbReference type="Gene3D" id="3.90.870.10">
    <property type="entry name" value="DHBP synthase"/>
    <property type="match status" value="1"/>
</dbReference>
<dbReference type="InterPro" id="IPR017945">
    <property type="entry name" value="DHBP_synth_RibB-like_a/b_dom"/>
</dbReference>
<dbReference type="InterPro" id="IPR006070">
    <property type="entry name" value="Sua5-like_dom"/>
</dbReference>
<dbReference type="InterPro" id="IPR050156">
    <property type="entry name" value="TC-AMP_synthase_SUA5"/>
</dbReference>
<dbReference type="NCBIfam" id="TIGR00057">
    <property type="entry name" value="L-threonylcarbamoyladenylate synthase"/>
    <property type="match status" value="1"/>
</dbReference>
<dbReference type="PANTHER" id="PTHR17490">
    <property type="entry name" value="SUA5"/>
    <property type="match status" value="1"/>
</dbReference>
<dbReference type="PANTHER" id="PTHR17490:SF16">
    <property type="entry name" value="THREONYLCARBAMOYL-AMP SYNTHASE"/>
    <property type="match status" value="1"/>
</dbReference>
<dbReference type="Pfam" id="PF01300">
    <property type="entry name" value="Sua5_yciO_yrdC"/>
    <property type="match status" value="1"/>
</dbReference>
<dbReference type="SUPFAM" id="SSF55821">
    <property type="entry name" value="YrdC/RibB"/>
    <property type="match status" value="1"/>
</dbReference>
<dbReference type="PROSITE" id="PS51163">
    <property type="entry name" value="YRDC"/>
    <property type="match status" value="1"/>
</dbReference>
<comment type="function">
    <text evidence="1">Required for the formation of a threonylcarbamoyl group on adenosine at position 37 (t(6)A37) in tRNAs that read codons beginning with adenine. Catalyzes the conversion of L-threonine, HCO(3)(-)/CO(2) and ATP to give threonylcarbamoyl-AMP (TC-AMP) as the acyladenylate intermediate, with the release of diphosphate.</text>
</comment>
<comment type="catalytic activity">
    <reaction>
        <text>L-threonine + hydrogencarbonate + ATP = L-threonylcarbamoyladenylate + diphosphate + H2O</text>
        <dbReference type="Rhea" id="RHEA:36407"/>
        <dbReference type="ChEBI" id="CHEBI:15377"/>
        <dbReference type="ChEBI" id="CHEBI:17544"/>
        <dbReference type="ChEBI" id="CHEBI:30616"/>
        <dbReference type="ChEBI" id="CHEBI:33019"/>
        <dbReference type="ChEBI" id="CHEBI:57926"/>
        <dbReference type="ChEBI" id="CHEBI:73682"/>
        <dbReference type="EC" id="2.7.7.87"/>
    </reaction>
</comment>
<comment type="subcellular location">
    <subcellularLocation>
        <location evidence="3">Cytoplasm</location>
    </subcellularLocation>
</comment>
<comment type="similarity">
    <text evidence="3">Belongs to the SUA5 family.</text>
</comment>
<organism>
    <name type="scientific">Mycobacterium tuberculosis (strain CDC 1551 / Oshkosh)</name>
    <dbReference type="NCBI Taxonomy" id="83331"/>
    <lineage>
        <taxon>Bacteria</taxon>
        <taxon>Bacillati</taxon>
        <taxon>Actinomycetota</taxon>
        <taxon>Actinomycetes</taxon>
        <taxon>Mycobacteriales</taxon>
        <taxon>Mycobacteriaceae</taxon>
        <taxon>Mycobacterium</taxon>
        <taxon>Mycobacterium tuberculosis complex</taxon>
    </lineage>
</organism>
<keyword id="KW-0067">ATP-binding</keyword>
<keyword id="KW-0963">Cytoplasm</keyword>
<keyword id="KW-0547">Nucleotide-binding</keyword>
<keyword id="KW-0548">Nucleotidyltransferase</keyword>
<keyword id="KW-1185">Reference proteome</keyword>
<keyword id="KW-0808">Transferase</keyword>
<keyword id="KW-0819">tRNA processing</keyword>
<feature type="chain" id="PRO_0000428384" description="Putative threonylcarbamoyl-AMP synthase">
    <location>
        <begin position="1"/>
        <end position="217"/>
    </location>
</feature>
<feature type="domain" description="YrdC-like" evidence="2">
    <location>
        <begin position="14"/>
        <end position="199"/>
    </location>
</feature>
<evidence type="ECO:0000250" key="1"/>
<evidence type="ECO:0000255" key="2">
    <source>
        <dbReference type="PROSITE-ProRule" id="PRU00518"/>
    </source>
</evidence>
<evidence type="ECO:0000305" key="3"/>
<accession>P9WGC8</accession>
<accession>L0T985</accession>
<accession>Q10618</accession>
<gene>
    <name type="ordered locus">MT1340</name>
</gene>